<keyword id="KW-0539">Nucleus</keyword>
<keyword id="KW-1185">Reference proteome</keyword>
<comment type="function">
    <text evidence="2">Involved in meiotic chromosome segregation.</text>
</comment>
<comment type="subcellular location">
    <subcellularLocation>
        <location evidence="3">Nucleus</location>
    </subcellularLocation>
</comment>
<dbReference type="EMBL" id="CU329670">
    <property type="protein sequence ID" value="CAB16568.1"/>
    <property type="molecule type" value="Genomic_DNA"/>
</dbReference>
<dbReference type="PIR" id="T37808">
    <property type="entry name" value="T37808"/>
</dbReference>
<dbReference type="RefSeq" id="NP_594241.1">
    <property type="nucleotide sequence ID" value="NM_001019664.2"/>
</dbReference>
<dbReference type="STRING" id="284812.O13757"/>
<dbReference type="iPTMnet" id="O13757"/>
<dbReference type="SwissPalm" id="O13757"/>
<dbReference type="PaxDb" id="4896-SPAC17A2.07c.1"/>
<dbReference type="EnsemblFungi" id="SPAC17A2.07c.1">
    <property type="protein sequence ID" value="SPAC17A2.07c.1:pep"/>
    <property type="gene ID" value="SPAC17A2.07c"/>
</dbReference>
<dbReference type="KEGG" id="spo:2542282"/>
<dbReference type="PomBase" id="SPAC17A2.07c"/>
<dbReference type="VEuPathDB" id="FungiDB:SPAC17A2.07c"/>
<dbReference type="HOGENOM" id="CLU_1441815_0_0_1"/>
<dbReference type="InParanoid" id="O13757"/>
<dbReference type="OMA" id="NPRTIEM"/>
<dbReference type="PRO" id="PR:O13757"/>
<dbReference type="Proteomes" id="UP000002485">
    <property type="component" value="Chromosome I"/>
</dbReference>
<dbReference type="GO" id="GO:0005635">
    <property type="term" value="C:nuclear envelope"/>
    <property type="evidence" value="ECO:0007005"/>
    <property type="project" value="PomBase"/>
</dbReference>
<organism>
    <name type="scientific">Schizosaccharomyces pombe (strain 972 / ATCC 24843)</name>
    <name type="common">Fission yeast</name>
    <dbReference type="NCBI Taxonomy" id="284812"/>
    <lineage>
        <taxon>Eukaryota</taxon>
        <taxon>Fungi</taxon>
        <taxon>Dikarya</taxon>
        <taxon>Ascomycota</taxon>
        <taxon>Taphrinomycotina</taxon>
        <taxon>Schizosaccharomycetes</taxon>
        <taxon>Schizosaccharomycetales</taxon>
        <taxon>Schizosaccharomycetaceae</taxon>
        <taxon>Schizosaccharomyces</taxon>
    </lineage>
</organism>
<protein>
    <recommendedName>
        <fullName>Meiotic chromosome segregation protein C17A2.07c</fullName>
    </recommendedName>
</protein>
<feature type="chain" id="PRO_0000373866" description="Meiotic chromosome segregation protein C17A2.07c">
    <location>
        <begin position="1"/>
        <end position="177"/>
    </location>
</feature>
<feature type="region of interest" description="Disordered" evidence="1">
    <location>
        <begin position="71"/>
        <end position="90"/>
    </location>
</feature>
<feature type="compositionally biased region" description="Basic and acidic residues" evidence="1">
    <location>
        <begin position="74"/>
        <end position="86"/>
    </location>
</feature>
<gene>
    <name type="ORF">SPAC17A2.07c</name>
</gene>
<evidence type="ECO:0000256" key="1">
    <source>
        <dbReference type="SAM" id="MobiDB-lite"/>
    </source>
</evidence>
<evidence type="ECO:0000269" key="2">
    <source>
    </source>
</evidence>
<evidence type="ECO:0000269" key="3">
    <source>
    </source>
</evidence>
<reference key="1">
    <citation type="journal article" date="2002" name="Nature">
        <title>The genome sequence of Schizosaccharomyces pombe.</title>
        <authorList>
            <person name="Wood V."/>
            <person name="Gwilliam R."/>
            <person name="Rajandream M.A."/>
            <person name="Lyne M.H."/>
            <person name="Lyne R."/>
            <person name="Stewart A."/>
            <person name="Sgouros J.G."/>
            <person name="Peat N."/>
            <person name="Hayles J."/>
            <person name="Baker S.G."/>
            <person name="Basham D."/>
            <person name="Bowman S."/>
            <person name="Brooks K."/>
            <person name="Brown D."/>
            <person name="Brown S."/>
            <person name="Chillingworth T."/>
            <person name="Churcher C.M."/>
            <person name="Collins M."/>
            <person name="Connor R."/>
            <person name="Cronin A."/>
            <person name="Davis P."/>
            <person name="Feltwell T."/>
            <person name="Fraser A."/>
            <person name="Gentles S."/>
            <person name="Goble A."/>
            <person name="Hamlin N."/>
            <person name="Harris D.E."/>
            <person name="Hidalgo J."/>
            <person name="Hodgson G."/>
            <person name="Holroyd S."/>
            <person name="Hornsby T."/>
            <person name="Howarth S."/>
            <person name="Huckle E.J."/>
            <person name="Hunt S."/>
            <person name="Jagels K."/>
            <person name="James K.D."/>
            <person name="Jones L."/>
            <person name="Jones M."/>
            <person name="Leather S."/>
            <person name="McDonald S."/>
            <person name="McLean J."/>
            <person name="Mooney P."/>
            <person name="Moule S."/>
            <person name="Mungall K.L."/>
            <person name="Murphy L.D."/>
            <person name="Niblett D."/>
            <person name="Odell C."/>
            <person name="Oliver K."/>
            <person name="O'Neil S."/>
            <person name="Pearson D."/>
            <person name="Quail M.A."/>
            <person name="Rabbinowitsch E."/>
            <person name="Rutherford K.M."/>
            <person name="Rutter S."/>
            <person name="Saunders D."/>
            <person name="Seeger K."/>
            <person name="Sharp S."/>
            <person name="Skelton J."/>
            <person name="Simmonds M.N."/>
            <person name="Squares R."/>
            <person name="Squares S."/>
            <person name="Stevens K."/>
            <person name="Taylor K."/>
            <person name="Taylor R.G."/>
            <person name="Tivey A."/>
            <person name="Walsh S.V."/>
            <person name="Warren T."/>
            <person name="Whitehead S."/>
            <person name="Woodward J.R."/>
            <person name="Volckaert G."/>
            <person name="Aert R."/>
            <person name="Robben J."/>
            <person name="Grymonprez B."/>
            <person name="Weltjens I."/>
            <person name="Vanstreels E."/>
            <person name="Rieger M."/>
            <person name="Schaefer M."/>
            <person name="Mueller-Auer S."/>
            <person name="Gabel C."/>
            <person name="Fuchs M."/>
            <person name="Duesterhoeft A."/>
            <person name="Fritzc C."/>
            <person name="Holzer E."/>
            <person name="Moestl D."/>
            <person name="Hilbert H."/>
            <person name="Borzym K."/>
            <person name="Langer I."/>
            <person name="Beck A."/>
            <person name="Lehrach H."/>
            <person name="Reinhardt R."/>
            <person name="Pohl T.M."/>
            <person name="Eger P."/>
            <person name="Zimmermann W."/>
            <person name="Wedler H."/>
            <person name="Wambutt R."/>
            <person name="Purnelle B."/>
            <person name="Goffeau A."/>
            <person name="Cadieu E."/>
            <person name="Dreano S."/>
            <person name="Gloux S."/>
            <person name="Lelaure V."/>
            <person name="Mottier S."/>
            <person name="Galibert F."/>
            <person name="Aves S.J."/>
            <person name="Xiang Z."/>
            <person name="Hunt C."/>
            <person name="Moore K."/>
            <person name="Hurst S.M."/>
            <person name="Lucas M."/>
            <person name="Rochet M."/>
            <person name="Gaillardin C."/>
            <person name="Tallada V.A."/>
            <person name="Garzon A."/>
            <person name="Thode G."/>
            <person name="Daga R.R."/>
            <person name="Cruzado L."/>
            <person name="Jimenez J."/>
            <person name="Sanchez M."/>
            <person name="del Rey F."/>
            <person name="Benito J."/>
            <person name="Dominguez A."/>
            <person name="Revuelta J.L."/>
            <person name="Moreno S."/>
            <person name="Armstrong J."/>
            <person name="Forsburg S.L."/>
            <person name="Cerutti L."/>
            <person name="Lowe T."/>
            <person name="McCombie W.R."/>
            <person name="Paulsen I."/>
            <person name="Potashkin J."/>
            <person name="Shpakovski G.V."/>
            <person name="Ussery D."/>
            <person name="Barrell B.G."/>
            <person name="Nurse P."/>
        </authorList>
    </citation>
    <scope>NUCLEOTIDE SEQUENCE [LARGE SCALE GENOMIC DNA]</scope>
    <source>
        <strain>972 / ATCC 24843</strain>
    </source>
</reference>
<reference key="2">
    <citation type="journal article" date="2005" name="Curr. Biol.">
        <title>Novel genes required for meiotic chromosome segregation are identified by a high-throughput knockout screen in fission yeast.</title>
        <authorList>
            <person name="Gregan J."/>
            <person name="Rabitsch P.K."/>
            <person name="Sakem B."/>
            <person name="Csutak O."/>
            <person name="Latypov V."/>
            <person name="Lehmann E."/>
            <person name="Kohli J."/>
            <person name="Nasmyth K."/>
        </authorList>
    </citation>
    <scope>FUNCTION</scope>
</reference>
<reference key="3">
    <citation type="journal article" date="2006" name="Nat. Biotechnol.">
        <title>ORFeome cloning and global analysis of protein localization in the fission yeast Schizosaccharomyces pombe.</title>
        <authorList>
            <person name="Matsuyama A."/>
            <person name="Arai R."/>
            <person name="Yashiroda Y."/>
            <person name="Shirai A."/>
            <person name="Kamata A."/>
            <person name="Sekido S."/>
            <person name="Kobayashi Y."/>
            <person name="Hashimoto A."/>
            <person name="Hamamoto M."/>
            <person name="Hiraoka Y."/>
            <person name="Horinouchi S."/>
            <person name="Yoshida M."/>
        </authorList>
    </citation>
    <scope>SUBCELLULAR LOCATION [LARGE SCALE ANALYSIS]</scope>
</reference>
<proteinExistence type="predicted"/>
<accession>O13757</accession>
<name>YF27_SCHPO</name>
<sequence>MALKRSYYASKDDYSTKRILEIIERPLKKLTIEDTSEYDDSDIEMPTCKRVAYYKNEYTIVVEDLDAELEEDDSINKPTEEADEAPRTQLSVISPLEKKLKRDFLFLLLNSNRQPGKSSGKSSIPSPDDFKLSVKYSSSSEDLGAVTIESHLNVSSDASIKYKSSGTSQSDLLMEIG</sequence>